<reference key="1">
    <citation type="submission" date="1996-03" db="EMBL/GenBank/DDBJ databases">
        <authorList>
            <person name="Platzer J."/>
            <person name="Schmitt R."/>
        </authorList>
    </citation>
    <scope>NUCLEOTIDE SEQUENCE [GENOMIC DNA]</scope>
    <source>
        <strain>RU11/001</strain>
    </source>
</reference>
<reference key="2">
    <citation type="submission" date="2001-01" db="EMBL/GenBank/DDBJ databases">
        <authorList>
            <person name="Schmitt R."/>
        </authorList>
    </citation>
    <scope>SEQUENCE REVISION TO 104; 114; 207-208 AND 213</scope>
</reference>
<reference key="3">
    <citation type="journal article" date="2001" name="Proc. Natl. Acad. Sci. U.S.A.">
        <title>Analysis of the chromosome sequence of the legume symbiont Sinorhizobium meliloti strain 1021.</title>
        <authorList>
            <person name="Capela D."/>
            <person name="Barloy-Hubler F."/>
            <person name="Gouzy J."/>
            <person name="Bothe G."/>
            <person name="Ampe F."/>
            <person name="Batut J."/>
            <person name="Boistard P."/>
            <person name="Becker A."/>
            <person name="Boutry M."/>
            <person name="Cadieu E."/>
            <person name="Dreano S."/>
            <person name="Gloux S."/>
            <person name="Godrie T."/>
            <person name="Goffeau A."/>
            <person name="Kahn D."/>
            <person name="Kiss E."/>
            <person name="Lelaure V."/>
            <person name="Masuy D."/>
            <person name="Pohl T."/>
            <person name="Portetelle D."/>
            <person name="Puehler A."/>
            <person name="Purnelle B."/>
            <person name="Ramsperger U."/>
            <person name="Renard C."/>
            <person name="Thebault P."/>
            <person name="Vandenbol M."/>
            <person name="Weidner S."/>
            <person name="Galibert F."/>
        </authorList>
    </citation>
    <scope>NUCLEOTIDE SEQUENCE [LARGE SCALE GENOMIC DNA]</scope>
    <source>
        <strain>1021</strain>
    </source>
</reference>
<reference key="4">
    <citation type="journal article" date="2001" name="Science">
        <title>The composite genome of the legume symbiont Sinorhizobium meliloti.</title>
        <authorList>
            <person name="Galibert F."/>
            <person name="Finan T.M."/>
            <person name="Long S.R."/>
            <person name="Puehler A."/>
            <person name="Abola P."/>
            <person name="Ampe F."/>
            <person name="Barloy-Hubler F."/>
            <person name="Barnett M.J."/>
            <person name="Becker A."/>
            <person name="Boistard P."/>
            <person name="Bothe G."/>
            <person name="Boutry M."/>
            <person name="Bowser L."/>
            <person name="Buhrmester J."/>
            <person name="Cadieu E."/>
            <person name="Capela D."/>
            <person name="Chain P."/>
            <person name="Cowie A."/>
            <person name="Davis R.W."/>
            <person name="Dreano S."/>
            <person name="Federspiel N.A."/>
            <person name="Fisher R.F."/>
            <person name="Gloux S."/>
            <person name="Godrie T."/>
            <person name="Goffeau A."/>
            <person name="Golding B."/>
            <person name="Gouzy J."/>
            <person name="Gurjal M."/>
            <person name="Hernandez-Lucas I."/>
            <person name="Hong A."/>
            <person name="Huizar L."/>
            <person name="Hyman R.W."/>
            <person name="Jones T."/>
            <person name="Kahn D."/>
            <person name="Kahn M.L."/>
            <person name="Kalman S."/>
            <person name="Keating D.H."/>
            <person name="Kiss E."/>
            <person name="Komp C."/>
            <person name="Lelaure V."/>
            <person name="Masuy D."/>
            <person name="Palm C."/>
            <person name="Peck M.C."/>
            <person name="Pohl T.M."/>
            <person name="Portetelle D."/>
            <person name="Purnelle B."/>
            <person name="Ramsperger U."/>
            <person name="Surzycki R."/>
            <person name="Thebault P."/>
            <person name="Vandenbol M."/>
            <person name="Vorhoelter F.J."/>
            <person name="Weidner S."/>
            <person name="Wells D.H."/>
            <person name="Wong K."/>
            <person name="Yeh K.-C."/>
            <person name="Batut J."/>
        </authorList>
    </citation>
    <scope>NUCLEOTIDE SEQUENCE [LARGE SCALE GENOMIC DNA]</scope>
    <source>
        <strain>1021</strain>
    </source>
</reference>
<feature type="signal peptide" evidence="2">
    <location>
        <begin position="1"/>
        <end position="16"/>
    </location>
</feature>
<feature type="chain" id="PRO_0000009465" description="Flagellar L-ring protein">
    <location>
        <begin position="17"/>
        <end position="236"/>
    </location>
</feature>
<feature type="region of interest" description="Disordered" evidence="3">
    <location>
        <begin position="96"/>
        <end position="143"/>
    </location>
</feature>
<feature type="compositionally biased region" description="Polar residues" evidence="3">
    <location>
        <begin position="105"/>
        <end position="122"/>
    </location>
</feature>
<feature type="lipid moiety-binding region" description="N-palmitoyl cysteine" evidence="2">
    <location>
        <position position="17"/>
    </location>
</feature>
<feature type="lipid moiety-binding region" description="S-diacylglycerol cysteine" evidence="2">
    <location>
        <position position="17"/>
    </location>
</feature>
<feature type="sequence conflict" description="In Ref. 1; AAB81417." evidence="4" ref="1">
    <original>K</original>
    <variation>T</variation>
    <location>
        <position position="104"/>
    </location>
</feature>
<comment type="function">
    <text evidence="1">Assembles around the rod to form the L-ring and probably protects the motor/basal body from shearing forces during rotation.</text>
</comment>
<comment type="subunit">
    <text evidence="1">The basal body constitutes a major portion of the flagellar organelle and consists of four rings (L,P,S, and M) mounted on a central rod.</text>
</comment>
<comment type="subcellular location">
    <subcellularLocation>
        <location evidence="1">Cell outer membrane</location>
        <topology evidence="1">Lipid-anchor</topology>
    </subcellularLocation>
    <subcellularLocation>
        <location evidence="1">Bacterial flagellum basal body</location>
    </subcellularLocation>
</comment>
<comment type="similarity">
    <text evidence="4">Belongs to the FlgH family.</text>
</comment>
<organism>
    <name type="scientific">Rhizobium meliloti (strain 1021)</name>
    <name type="common">Ensifer meliloti</name>
    <name type="synonym">Sinorhizobium meliloti</name>
    <dbReference type="NCBI Taxonomy" id="266834"/>
    <lineage>
        <taxon>Bacteria</taxon>
        <taxon>Pseudomonadati</taxon>
        <taxon>Pseudomonadota</taxon>
        <taxon>Alphaproteobacteria</taxon>
        <taxon>Hyphomicrobiales</taxon>
        <taxon>Rhizobiaceae</taxon>
        <taxon>Sinorhizobium/Ensifer group</taxon>
        <taxon>Sinorhizobium</taxon>
    </lineage>
</organism>
<keyword id="KW-0975">Bacterial flagellum</keyword>
<keyword id="KW-0998">Cell outer membrane</keyword>
<keyword id="KW-0449">Lipoprotein</keyword>
<keyword id="KW-0472">Membrane</keyword>
<keyword id="KW-0564">Palmitate</keyword>
<keyword id="KW-1185">Reference proteome</keyword>
<keyword id="KW-0732">Signal</keyword>
<gene>
    <name type="primary">flgH</name>
    <name type="ordered locus">R00666</name>
    <name type="ORF">SMc03034</name>
</gene>
<accession>Q52950</accession>
<protein>
    <recommendedName>
        <fullName>Flagellar L-ring protein</fullName>
    </recommendedName>
    <alternativeName>
        <fullName>Basal body L-ring protein</fullName>
    </alternativeName>
</protein>
<evidence type="ECO:0000250" key="1"/>
<evidence type="ECO:0000255" key="2"/>
<evidence type="ECO:0000256" key="3">
    <source>
        <dbReference type="SAM" id="MobiDB-lite"/>
    </source>
</evidence>
<evidence type="ECO:0000305" key="4"/>
<dbReference type="EMBL" id="L49337">
    <property type="protein sequence ID" value="AAB81417.2"/>
    <property type="molecule type" value="Genomic_DNA"/>
</dbReference>
<dbReference type="EMBL" id="AL591688">
    <property type="protein sequence ID" value="CAC45238.1"/>
    <property type="molecule type" value="Genomic_DNA"/>
</dbReference>
<dbReference type="RefSeq" id="NP_384772.1">
    <property type="nucleotide sequence ID" value="NC_003047.1"/>
</dbReference>
<dbReference type="RefSeq" id="WP_003529888.1">
    <property type="nucleotide sequence ID" value="NC_003047.1"/>
</dbReference>
<dbReference type="SMR" id="Q52950"/>
<dbReference type="EnsemblBacteria" id="CAC45238">
    <property type="protein sequence ID" value="CAC45238"/>
    <property type="gene ID" value="SMc03034"/>
</dbReference>
<dbReference type="KEGG" id="sme:SMc03034"/>
<dbReference type="PATRIC" id="fig|266834.11.peg.2040"/>
<dbReference type="eggNOG" id="COG2063">
    <property type="taxonomic scope" value="Bacteria"/>
</dbReference>
<dbReference type="HOGENOM" id="CLU_069313_1_2_5"/>
<dbReference type="OrthoDB" id="9789227at2"/>
<dbReference type="Proteomes" id="UP000001976">
    <property type="component" value="Chromosome"/>
</dbReference>
<dbReference type="GO" id="GO:0009427">
    <property type="term" value="C:bacterial-type flagellum basal body, distal rod, L ring"/>
    <property type="evidence" value="ECO:0007669"/>
    <property type="project" value="InterPro"/>
</dbReference>
<dbReference type="GO" id="GO:0009279">
    <property type="term" value="C:cell outer membrane"/>
    <property type="evidence" value="ECO:0007669"/>
    <property type="project" value="UniProtKB-SubCell"/>
</dbReference>
<dbReference type="GO" id="GO:0003774">
    <property type="term" value="F:cytoskeletal motor activity"/>
    <property type="evidence" value="ECO:0007669"/>
    <property type="project" value="InterPro"/>
</dbReference>
<dbReference type="GO" id="GO:0071973">
    <property type="term" value="P:bacterial-type flagellum-dependent cell motility"/>
    <property type="evidence" value="ECO:0007669"/>
    <property type="project" value="InterPro"/>
</dbReference>
<dbReference type="HAMAP" id="MF_00415">
    <property type="entry name" value="FlgH"/>
    <property type="match status" value="1"/>
</dbReference>
<dbReference type="InterPro" id="IPR000527">
    <property type="entry name" value="Flag_Lring"/>
</dbReference>
<dbReference type="NCBIfam" id="NF001305">
    <property type="entry name" value="PRK00249.1-5"/>
    <property type="match status" value="1"/>
</dbReference>
<dbReference type="PANTHER" id="PTHR34933">
    <property type="entry name" value="FLAGELLAR L-RING PROTEIN"/>
    <property type="match status" value="1"/>
</dbReference>
<dbReference type="PANTHER" id="PTHR34933:SF1">
    <property type="entry name" value="FLAGELLAR L-RING PROTEIN"/>
    <property type="match status" value="1"/>
</dbReference>
<dbReference type="Pfam" id="PF02107">
    <property type="entry name" value="FlgH"/>
    <property type="match status" value="1"/>
</dbReference>
<dbReference type="PRINTS" id="PR01008">
    <property type="entry name" value="FLGLRINGFLGH"/>
</dbReference>
<dbReference type="PROSITE" id="PS51257">
    <property type="entry name" value="PROKAR_LIPOPROTEIN"/>
    <property type="match status" value="1"/>
</dbReference>
<sequence>MRTRITAVLAAGLLAGCQNQAFNEIGRAPAMSPIGSGLQYTQTPQLAMYPKQPRHVTNGYSLWNDQQAALFKDARAINIGDILTVDIRIDDKASFENETDRSRKNSSGFNLGASGQSQTSDFAWSGDLEYGSNTKTEGDGKTERSEKLRLLVAAVVTGVLENGNLLISGSQEVRVNHELRILNVAGIVRPRDVDADNVISYDRIAEARISYGGRGRLTEVQQPPWGQQLVDLVSPL</sequence>
<name>FLGH_RHIME</name>
<proteinExistence type="inferred from homology"/>